<evidence type="ECO:0000255" key="1">
    <source>
        <dbReference type="HAMAP-Rule" id="MF_00337"/>
    </source>
</evidence>
<keyword id="KW-0963">Cytoplasm</keyword>
<keyword id="KW-0269">Exonuclease</keyword>
<keyword id="KW-0378">Hydrolase</keyword>
<keyword id="KW-0540">Nuclease</keyword>
<name>EX7S_ECOLC</name>
<accession>B1J027</accession>
<proteinExistence type="inferred from homology"/>
<gene>
    <name evidence="1" type="primary">xseB</name>
    <name type="ordered locus">EcolC_3211</name>
</gene>
<sequence length="80" mass="8952">MPKKNEAPASFEKALSELEQIVTRLESGDLPLEEALNEFERGVQLARQGQAKLQQAEQRVQILLSDNEDASLTPFTPDNE</sequence>
<protein>
    <recommendedName>
        <fullName evidence="1">Exodeoxyribonuclease 7 small subunit</fullName>
        <ecNumber evidence="1">3.1.11.6</ecNumber>
    </recommendedName>
    <alternativeName>
        <fullName evidence="1">Exodeoxyribonuclease VII small subunit</fullName>
        <shortName evidence="1">Exonuclease VII small subunit</shortName>
    </alternativeName>
</protein>
<feature type="chain" id="PRO_1000079284" description="Exodeoxyribonuclease 7 small subunit">
    <location>
        <begin position="1"/>
        <end position="80"/>
    </location>
</feature>
<comment type="function">
    <text evidence="1">Bidirectionally degrades single-stranded DNA into large acid-insoluble oligonucleotides, which are then degraded further into small acid-soluble oligonucleotides.</text>
</comment>
<comment type="catalytic activity">
    <reaction evidence="1">
        <text>Exonucleolytic cleavage in either 5'- to 3'- or 3'- to 5'-direction to yield nucleoside 5'-phosphates.</text>
        <dbReference type="EC" id="3.1.11.6"/>
    </reaction>
</comment>
<comment type="subunit">
    <text evidence="1">Heterooligomer composed of large and small subunits.</text>
</comment>
<comment type="subcellular location">
    <subcellularLocation>
        <location evidence="1">Cytoplasm</location>
    </subcellularLocation>
</comment>
<comment type="similarity">
    <text evidence="1">Belongs to the XseB family.</text>
</comment>
<dbReference type="EC" id="3.1.11.6" evidence="1"/>
<dbReference type="EMBL" id="CP000946">
    <property type="protein sequence ID" value="ACA78833.1"/>
    <property type="molecule type" value="Genomic_DNA"/>
</dbReference>
<dbReference type="RefSeq" id="WP_001124935.1">
    <property type="nucleotide sequence ID" value="NZ_MTFT01000010.1"/>
</dbReference>
<dbReference type="SMR" id="B1J027"/>
<dbReference type="GeneID" id="75202844"/>
<dbReference type="KEGG" id="ecl:EcolC_3211"/>
<dbReference type="HOGENOM" id="CLU_145918_3_3_6"/>
<dbReference type="GO" id="GO:0005829">
    <property type="term" value="C:cytosol"/>
    <property type="evidence" value="ECO:0007669"/>
    <property type="project" value="TreeGrafter"/>
</dbReference>
<dbReference type="GO" id="GO:0009318">
    <property type="term" value="C:exodeoxyribonuclease VII complex"/>
    <property type="evidence" value="ECO:0007669"/>
    <property type="project" value="InterPro"/>
</dbReference>
<dbReference type="GO" id="GO:0008855">
    <property type="term" value="F:exodeoxyribonuclease VII activity"/>
    <property type="evidence" value="ECO:0007669"/>
    <property type="project" value="UniProtKB-UniRule"/>
</dbReference>
<dbReference type="GO" id="GO:0006308">
    <property type="term" value="P:DNA catabolic process"/>
    <property type="evidence" value="ECO:0007669"/>
    <property type="project" value="UniProtKB-UniRule"/>
</dbReference>
<dbReference type="FunFam" id="1.10.287.1040:FF:000001">
    <property type="entry name" value="Exodeoxyribonuclease 7 small subunit"/>
    <property type="match status" value="1"/>
</dbReference>
<dbReference type="Gene3D" id="1.10.287.1040">
    <property type="entry name" value="Exonuclease VII, small subunit"/>
    <property type="match status" value="1"/>
</dbReference>
<dbReference type="HAMAP" id="MF_00337">
    <property type="entry name" value="Exonuc_7_S"/>
    <property type="match status" value="1"/>
</dbReference>
<dbReference type="InterPro" id="IPR003761">
    <property type="entry name" value="Exonuc_VII_S"/>
</dbReference>
<dbReference type="InterPro" id="IPR037004">
    <property type="entry name" value="Exonuc_VII_ssu_sf"/>
</dbReference>
<dbReference type="NCBIfam" id="NF002137">
    <property type="entry name" value="PRK00977.1-1"/>
    <property type="match status" value="1"/>
</dbReference>
<dbReference type="NCBIfam" id="NF002140">
    <property type="entry name" value="PRK00977.1-4"/>
    <property type="match status" value="1"/>
</dbReference>
<dbReference type="NCBIfam" id="TIGR01280">
    <property type="entry name" value="xseB"/>
    <property type="match status" value="1"/>
</dbReference>
<dbReference type="PANTHER" id="PTHR34137">
    <property type="entry name" value="EXODEOXYRIBONUCLEASE 7 SMALL SUBUNIT"/>
    <property type="match status" value="1"/>
</dbReference>
<dbReference type="PANTHER" id="PTHR34137:SF1">
    <property type="entry name" value="EXODEOXYRIBONUCLEASE 7 SMALL SUBUNIT"/>
    <property type="match status" value="1"/>
</dbReference>
<dbReference type="Pfam" id="PF02609">
    <property type="entry name" value="Exonuc_VII_S"/>
    <property type="match status" value="1"/>
</dbReference>
<dbReference type="PIRSF" id="PIRSF006488">
    <property type="entry name" value="Exonuc_VII_S"/>
    <property type="match status" value="1"/>
</dbReference>
<dbReference type="SUPFAM" id="SSF116842">
    <property type="entry name" value="XseB-like"/>
    <property type="match status" value="1"/>
</dbReference>
<reference key="1">
    <citation type="submission" date="2008-02" db="EMBL/GenBank/DDBJ databases">
        <title>Complete sequence of Escherichia coli C str. ATCC 8739.</title>
        <authorList>
            <person name="Copeland A."/>
            <person name="Lucas S."/>
            <person name="Lapidus A."/>
            <person name="Glavina del Rio T."/>
            <person name="Dalin E."/>
            <person name="Tice H."/>
            <person name="Bruce D."/>
            <person name="Goodwin L."/>
            <person name="Pitluck S."/>
            <person name="Kiss H."/>
            <person name="Brettin T."/>
            <person name="Detter J.C."/>
            <person name="Han C."/>
            <person name="Kuske C.R."/>
            <person name="Schmutz J."/>
            <person name="Larimer F."/>
            <person name="Land M."/>
            <person name="Hauser L."/>
            <person name="Kyrpides N."/>
            <person name="Mikhailova N."/>
            <person name="Ingram L."/>
            <person name="Richardson P."/>
        </authorList>
    </citation>
    <scope>NUCLEOTIDE SEQUENCE [LARGE SCALE GENOMIC DNA]</scope>
    <source>
        <strain>ATCC 8739 / DSM 1576 / NBRC 3972 / NCIMB 8545 / WDCM 00012 / Crooks</strain>
    </source>
</reference>
<organism>
    <name type="scientific">Escherichia coli (strain ATCC 8739 / DSM 1576 / NBRC 3972 / NCIMB 8545 / WDCM 00012 / Crooks)</name>
    <dbReference type="NCBI Taxonomy" id="481805"/>
    <lineage>
        <taxon>Bacteria</taxon>
        <taxon>Pseudomonadati</taxon>
        <taxon>Pseudomonadota</taxon>
        <taxon>Gammaproteobacteria</taxon>
        <taxon>Enterobacterales</taxon>
        <taxon>Enterobacteriaceae</taxon>
        <taxon>Escherichia</taxon>
    </lineage>
</organism>